<protein>
    <recommendedName>
        <fullName evidence="1">Cytochrome c biogenesis ATP-binding export protein CcmA</fullName>
        <ecNumber evidence="1">7.6.2.5</ecNumber>
    </recommendedName>
    <alternativeName>
        <fullName evidence="1">Heme exporter protein A</fullName>
    </alternativeName>
</protein>
<name>CCMA_IDILO</name>
<accession>Q5QZP7</accession>
<feature type="chain" id="PRO_0000092183" description="Cytochrome c biogenesis ATP-binding export protein CcmA">
    <location>
        <begin position="1"/>
        <end position="218"/>
    </location>
</feature>
<feature type="domain" description="ABC transporter" evidence="1">
    <location>
        <begin position="12"/>
        <end position="217"/>
    </location>
</feature>
<feature type="binding site" evidence="1">
    <location>
        <begin position="44"/>
        <end position="51"/>
    </location>
    <ligand>
        <name>ATP</name>
        <dbReference type="ChEBI" id="CHEBI:30616"/>
    </ligand>
</feature>
<evidence type="ECO:0000255" key="1">
    <source>
        <dbReference type="HAMAP-Rule" id="MF_01707"/>
    </source>
</evidence>
<reference key="1">
    <citation type="journal article" date="2004" name="Proc. Natl. Acad. Sci. U.S.A.">
        <title>Genome sequence of the deep-sea gamma-proteobacterium Idiomarina loihiensis reveals amino acid fermentation as a source of carbon and energy.</title>
        <authorList>
            <person name="Hou S."/>
            <person name="Saw J.H."/>
            <person name="Lee K.S."/>
            <person name="Freitas T.A."/>
            <person name="Belisle C."/>
            <person name="Kawarabayasi Y."/>
            <person name="Donachie S.P."/>
            <person name="Pikina A."/>
            <person name="Galperin M.Y."/>
            <person name="Koonin E.V."/>
            <person name="Makarova K.S."/>
            <person name="Omelchenko M.V."/>
            <person name="Sorokin A."/>
            <person name="Wolf Y.I."/>
            <person name="Li Q.X."/>
            <person name="Keum Y.S."/>
            <person name="Campbell S."/>
            <person name="Denery J."/>
            <person name="Aizawa S."/>
            <person name="Shibata S."/>
            <person name="Malahoff A."/>
            <person name="Alam M."/>
        </authorList>
    </citation>
    <scope>NUCLEOTIDE SEQUENCE [LARGE SCALE GENOMIC DNA]</scope>
    <source>
        <strain>ATCC BAA-735 / DSM 15497 / L2-TR</strain>
    </source>
</reference>
<comment type="function">
    <text evidence="1">Part of the ABC transporter complex CcmAB involved in the biogenesis of c-type cytochromes; once thought to export heme, this seems not to be the case, but its exact role is uncertain. Responsible for energy coupling to the transport system.</text>
</comment>
<comment type="catalytic activity">
    <reaction evidence="1">
        <text>heme b(in) + ATP + H2O = heme b(out) + ADP + phosphate + H(+)</text>
        <dbReference type="Rhea" id="RHEA:19261"/>
        <dbReference type="ChEBI" id="CHEBI:15377"/>
        <dbReference type="ChEBI" id="CHEBI:15378"/>
        <dbReference type="ChEBI" id="CHEBI:30616"/>
        <dbReference type="ChEBI" id="CHEBI:43474"/>
        <dbReference type="ChEBI" id="CHEBI:60344"/>
        <dbReference type="ChEBI" id="CHEBI:456216"/>
        <dbReference type="EC" id="7.6.2.5"/>
    </reaction>
</comment>
<comment type="subunit">
    <text evidence="1">The complex is composed of two ATP-binding proteins (CcmA) and two transmembrane proteins (CcmB).</text>
</comment>
<comment type="subcellular location">
    <subcellularLocation>
        <location evidence="1">Cell inner membrane</location>
        <topology evidence="1">Peripheral membrane protein</topology>
    </subcellularLocation>
</comment>
<comment type="similarity">
    <text evidence="1">Belongs to the ABC transporter superfamily. CcmA exporter (TC 3.A.1.107) family.</text>
</comment>
<keyword id="KW-0067">ATP-binding</keyword>
<keyword id="KW-0997">Cell inner membrane</keyword>
<keyword id="KW-1003">Cell membrane</keyword>
<keyword id="KW-0201">Cytochrome c-type biogenesis</keyword>
<keyword id="KW-0472">Membrane</keyword>
<keyword id="KW-0547">Nucleotide-binding</keyword>
<keyword id="KW-1185">Reference proteome</keyword>
<keyword id="KW-1278">Translocase</keyword>
<keyword id="KW-0813">Transport</keyword>
<gene>
    <name evidence="1" type="primary">ccmA</name>
    <name type="ordered locus">IL1106</name>
</gene>
<sequence>MTQVASTNSPLLHAEQLSSIRGGRVLFENLDFSVSAGQLWQVSGPNGAGKSSLLRILTGLLEPSDGVVSFDGQPLNQNWSEYCQQLLFIGHKAAVKGELSALENFHWQQQLSSVQDVDAWDLLEKLGLLGLEDELTTRLSAGQQRRVALTRLWATQASLWILDEPFTALDVQGIALLQQRFVEHLDAGGTIIFTSHQSLTLSGLTPEKLSLEYRGEVL</sequence>
<organism>
    <name type="scientific">Idiomarina loihiensis (strain ATCC BAA-735 / DSM 15497 / L2-TR)</name>
    <dbReference type="NCBI Taxonomy" id="283942"/>
    <lineage>
        <taxon>Bacteria</taxon>
        <taxon>Pseudomonadati</taxon>
        <taxon>Pseudomonadota</taxon>
        <taxon>Gammaproteobacteria</taxon>
        <taxon>Alteromonadales</taxon>
        <taxon>Idiomarinaceae</taxon>
        <taxon>Idiomarina</taxon>
    </lineage>
</organism>
<proteinExistence type="inferred from homology"/>
<dbReference type="EC" id="7.6.2.5" evidence="1"/>
<dbReference type="EMBL" id="AE017340">
    <property type="protein sequence ID" value="AAV81946.1"/>
    <property type="molecule type" value="Genomic_DNA"/>
</dbReference>
<dbReference type="RefSeq" id="WP_011234357.1">
    <property type="nucleotide sequence ID" value="NC_006512.1"/>
</dbReference>
<dbReference type="SMR" id="Q5QZP7"/>
<dbReference type="STRING" id="283942.IL1106"/>
<dbReference type="GeneID" id="41336274"/>
<dbReference type="KEGG" id="ilo:IL1106"/>
<dbReference type="eggNOG" id="COG4133">
    <property type="taxonomic scope" value="Bacteria"/>
</dbReference>
<dbReference type="HOGENOM" id="CLU_000604_1_2_6"/>
<dbReference type="OrthoDB" id="9800654at2"/>
<dbReference type="Proteomes" id="UP000001171">
    <property type="component" value="Chromosome"/>
</dbReference>
<dbReference type="GO" id="GO:0005886">
    <property type="term" value="C:plasma membrane"/>
    <property type="evidence" value="ECO:0007669"/>
    <property type="project" value="UniProtKB-SubCell"/>
</dbReference>
<dbReference type="GO" id="GO:0015439">
    <property type="term" value="F:ABC-type heme transporter activity"/>
    <property type="evidence" value="ECO:0007669"/>
    <property type="project" value="UniProtKB-EC"/>
</dbReference>
<dbReference type="GO" id="GO:0005524">
    <property type="term" value="F:ATP binding"/>
    <property type="evidence" value="ECO:0007669"/>
    <property type="project" value="UniProtKB-KW"/>
</dbReference>
<dbReference type="GO" id="GO:0016887">
    <property type="term" value="F:ATP hydrolysis activity"/>
    <property type="evidence" value="ECO:0007669"/>
    <property type="project" value="InterPro"/>
</dbReference>
<dbReference type="GO" id="GO:0017004">
    <property type="term" value="P:cytochrome complex assembly"/>
    <property type="evidence" value="ECO:0007669"/>
    <property type="project" value="UniProtKB-KW"/>
</dbReference>
<dbReference type="Gene3D" id="3.40.50.300">
    <property type="entry name" value="P-loop containing nucleotide triphosphate hydrolases"/>
    <property type="match status" value="1"/>
</dbReference>
<dbReference type="InterPro" id="IPR003593">
    <property type="entry name" value="AAA+_ATPase"/>
</dbReference>
<dbReference type="InterPro" id="IPR003439">
    <property type="entry name" value="ABC_transporter-like_ATP-bd"/>
</dbReference>
<dbReference type="InterPro" id="IPR005895">
    <property type="entry name" value="ABC_transptr_haem_export_CcmA"/>
</dbReference>
<dbReference type="InterPro" id="IPR027417">
    <property type="entry name" value="P-loop_NTPase"/>
</dbReference>
<dbReference type="NCBIfam" id="TIGR01189">
    <property type="entry name" value="ccmA"/>
    <property type="match status" value="1"/>
</dbReference>
<dbReference type="NCBIfam" id="NF010061">
    <property type="entry name" value="PRK13538.1"/>
    <property type="match status" value="1"/>
</dbReference>
<dbReference type="PANTHER" id="PTHR43499">
    <property type="entry name" value="ABC TRANSPORTER I FAMILY MEMBER 1"/>
    <property type="match status" value="1"/>
</dbReference>
<dbReference type="PANTHER" id="PTHR43499:SF1">
    <property type="entry name" value="ABC TRANSPORTER I FAMILY MEMBER 1"/>
    <property type="match status" value="1"/>
</dbReference>
<dbReference type="Pfam" id="PF00005">
    <property type="entry name" value="ABC_tran"/>
    <property type="match status" value="1"/>
</dbReference>
<dbReference type="SMART" id="SM00382">
    <property type="entry name" value="AAA"/>
    <property type="match status" value="1"/>
</dbReference>
<dbReference type="SUPFAM" id="SSF52540">
    <property type="entry name" value="P-loop containing nucleoside triphosphate hydrolases"/>
    <property type="match status" value="1"/>
</dbReference>
<dbReference type="PROSITE" id="PS50893">
    <property type="entry name" value="ABC_TRANSPORTER_2"/>
    <property type="match status" value="1"/>
</dbReference>
<dbReference type="PROSITE" id="PS51243">
    <property type="entry name" value="CCMA"/>
    <property type="match status" value="1"/>
</dbReference>